<accession>B4RQ50</accession>
<dbReference type="EC" id="1.2.1.38" evidence="1"/>
<dbReference type="EMBL" id="CP001050">
    <property type="protein sequence ID" value="ACF28862.1"/>
    <property type="molecule type" value="Genomic_DNA"/>
</dbReference>
<dbReference type="RefSeq" id="WP_003687386.1">
    <property type="nucleotide sequence ID" value="NC_011035.1"/>
</dbReference>
<dbReference type="SMR" id="B4RQ50"/>
<dbReference type="GeneID" id="66752382"/>
<dbReference type="KEGG" id="ngk:NGK_0164"/>
<dbReference type="HOGENOM" id="CLU_006384_0_1_4"/>
<dbReference type="UniPathway" id="UPA00068">
    <property type="reaction ID" value="UER00108"/>
</dbReference>
<dbReference type="Proteomes" id="UP000002564">
    <property type="component" value="Chromosome"/>
</dbReference>
<dbReference type="GO" id="GO:0005737">
    <property type="term" value="C:cytoplasm"/>
    <property type="evidence" value="ECO:0007669"/>
    <property type="project" value="UniProtKB-SubCell"/>
</dbReference>
<dbReference type="GO" id="GO:0003942">
    <property type="term" value="F:N-acetyl-gamma-glutamyl-phosphate reductase activity"/>
    <property type="evidence" value="ECO:0007669"/>
    <property type="project" value="UniProtKB-UniRule"/>
</dbReference>
<dbReference type="GO" id="GO:0051287">
    <property type="term" value="F:NAD binding"/>
    <property type="evidence" value="ECO:0007669"/>
    <property type="project" value="InterPro"/>
</dbReference>
<dbReference type="GO" id="GO:0070401">
    <property type="term" value="F:NADP+ binding"/>
    <property type="evidence" value="ECO:0007669"/>
    <property type="project" value="InterPro"/>
</dbReference>
<dbReference type="GO" id="GO:0006526">
    <property type="term" value="P:L-arginine biosynthetic process"/>
    <property type="evidence" value="ECO:0007669"/>
    <property type="project" value="UniProtKB-UniRule"/>
</dbReference>
<dbReference type="CDD" id="cd23934">
    <property type="entry name" value="AGPR_1_C"/>
    <property type="match status" value="1"/>
</dbReference>
<dbReference type="CDD" id="cd17895">
    <property type="entry name" value="AGPR_1_N"/>
    <property type="match status" value="1"/>
</dbReference>
<dbReference type="Gene3D" id="3.30.360.10">
    <property type="entry name" value="Dihydrodipicolinate Reductase, domain 2"/>
    <property type="match status" value="1"/>
</dbReference>
<dbReference type="Gene3D" id="3.40.50.720">
    <property type="entry name" value="NAD(P)-binding Rossmann-like Domain"/>
    <property type="match status" value="1"/>
</dbReference>
<dbReference type="HAMAP" id="MF_00150">
    <property type="entry name" value="ArgC_type1"/>
    <property type="match status" value="1"/>
</dbReference>
<dbReference type="InterPro" id="IPR023013">
    <property type="entry name" value="AGPR_AS"/>
</dbReference>
<dbReference type="InterPro" id="IPR000706">
    <property type="entry name" value="AGPR_type-1"/>
</dbReference>
<dbReference type="InterPro" id="IPR036291">
    <property type="entry name" value="NAD(P)-bd_dom_sf"/>
</dbReference>
<dbReference type="InterPro" id="IPR050085">
    <property type="entry name" value="NAGSA_dehydrogenase"/>
</dbReference>
<dbReference type="InterPro" id="IPR000534">
    <property type="entry name" value="Semialdehyde_DH_NAD-bd"/>
</dbReference>
<dbReference type="NCBIfam" id="TIGR01850">
    <property type="entry name" value="argC"/>
    <property type="match status" value="1"/>
</dbReference>
<dbReference type="PANTHER" id="PTHR32338:SF10">
    <property type="entry name" value="N-ACETYL-GAMMA-GLUTAMYL-PHOSPHATE REDUCTASE, CHLOROPLASTIC-RELATED"/>
    <property type="match status" value="1"/>
</dbReference>
<dbReference type="PANTHER" id="PTHR32338">
    <property type="entry name" value="N-ACETYL-GAMMA-GLUTAMYL-PHOSPHATE REDUCTASE, CHLOROPLASTIC-RELATED-RELATED"/>
    <property type="match status" value="1"/>
</dbReference>
<dbReference type="Pfam" id="PF01118">
    <property type="entry name" value="Semialdhyde_dh"/>
    <property type="match status" value="1"/>
</dbReference>
<dbReference type="Pfam" id="PF22698">
    <property type="entry name" value="Semialdhyde_dhC_1"/>
    <property type="match status" value="1"/>
</dbReference>
<dbReference type="SMART" id="SM00859">
    <property type="entry name" value="Semialdhyde_dh"/>
    <property type="match status" value="1"/>
</dbReference>
<dbReference type="SUPFAM" id="SSF55347">
    <property type="entry name" value="Glyceraldehyde-3-phosphate dehydrogenase-like, C-terminal domain"/>
    <property type="match status" value="1"/>
</dbReference>
<dbReference type="SUPFAM" id="SSF51735">
    <property type="entry name" value="NAD(P)-binding Rossmann-fold domains"/>
    <property type="match status" value="1"/>
</dbReference>
<dbReference type="PROSITE" id="PS01224">
    <property type="entry name" value="ARGC"/>
    <property type="match status" value="1"/>
</dbReference>
<keyword id="KW-0028">Amino-acid biosynthesis</keyword>
<keyword id="KW-0055">Arginine biosynthesis</keyword>
<keyword id="KW-0963">Cytoplasm</keyword>
<keyword id="KW-0521">NADP</keyword>
<keyword id="KW-0560">Oxidoreductase</keyword>
<protein>
    <recommendedName>
        <fullName evidence="1">N-acetyl-gamma-glutamyl-phosphate reductase</fullName>
        <shortName evidence="1">AGPR</shortName>
        <ecNumber evidence="1">1.2.1.38</ecNumber>
    </recommendedName>
    <alternativeName>
        <fullName evidence="1">N-acetyl-glutamate semialdehyde dehydrogenase</fullName>
        <shortName evidence="1">NAGSA dehydrogenase</shortName>
    </alternativeName>
</protein>
<comment type="function">
    <text evidence="1">Catalyzes the NADPH-dependent reduction of N-acetyl-5-glutamyl phosphate to yield N-acetyl-L-glutamate 5-semialdehyde.</text>
</comment>
<comment type="catalytic activity">
    <reaction evidence="1">
        <text>N-acetyl-L-glutamate 5-semialdehyde + phosphate + NADP(+) = N-acetyl-L-glutamyl 5-phosphate + NADPH + H(+)</text>
        <dbReference type="Rhea" id="RHEA:21588"/>
        <dbReference type="ChEBI" id="CHEBI:15378"/>
        <dbReference type="ChEBI" id="CHEBI:29123"/>
        <dbReference type="ChEBI" id="CHEBI:43474"/>
        <dbReference type="ChEBI" id="CHEBI:57783"/>
        <dbReference type="ChEBI" id="CHEBI:57936"/>
        <dbReference type="ChEBI" id="CHEBI:58349"/>
        <dbReference type="EC" id="1.2.1.38"/>
    </reaction>
</comment>
<comment type="pathway">
    <text evidence="1">Amino-acid biosynthesis; L-arginine biosynthesis; N(2)-acetyl-L-ornithine from L-glutamate: step 3/4.</text>
</comment>
<comment type="subcellular location">
    <subcellularLocation>
        <location evidence="1">Cytoplasm</location>
    </subcellularLocation>
</comment>
<comment type="similarity">
    <text evidence="1">Belongs to the NAGSA dehydrogenase family. Type 1 subfamily.</text>
</comment>
<reference key="1">
    <citation type="journal article" date="2008" name="J. Bacteriol.">
        <title>Complete genome sequence of Neisseria gonorrhoeae NCCP11945.</title>
        <authorList>
            <person name="Chung G.T."/>
            <person name="Yoo J.S."/>
            <person name="Oh H.B."/>
            <person name="Lee Y.S."/>
            <person name="Cha S.H."/>
            <person name="Kim S.J."/>
            <person name="Yoo C.K."/>
        </authorList>
    </citation>
    <scope>NUCLEOTIDE SEQUENCE [LARGE SCALE GENOMIC DNA]</scope>
    <source>
        <strain>NCCP11945</strain>
    </source>
</reference>
<sequence>MSKKIKAGIVGATGYTGVELLRLLAAHPDVEVAAVTSRSEAGTAVADYFPSLRGVYGLAFQTPDEAGLEQCDIVFFATPNGIAMKDAPRLIEQGVRVIDLSADFRIRDIPTWEHWYGMTHAAPGLVSQAVYGLSELNREAVAQARLVANPGCYPTCVSLPLVPLLRQCRLKPGMPLIADCKSGVSGAGRKGNVGSLLCEAGDNFKAYGTAGHRHLPEIRQTIAGLQDGIAEGFVFTPHLAPMIRGMHATVYLHLSDGSDPETVLRDYYRDSPFMDILPAGSTPETRSVRGANLCRISIRQAAQSDVWVVLSVIDNLVKGAAGQAVQNMNIMFGLEETHGLGGIPLLP</sequence>
<gene>
    <name evidence="1" type="primary">argC</name>
    <name type="ordered locus">NGK_0164</name>
</gene>
<organism>
    <name type="scientific">Neisseria gonorrhoeae (strain NCCP11945)</name>
    <dbReference type="NCBI Taxonomy" id="521006"/>
    <lineage>
        <taxon>Bacteria</taxon>
        <taxon>Pseudomonadati</taxon>
        <taxon>Pseudomonadota</taxon>
        <taxon>Betaproteobacteria</taxon>
        <taxon>Neisseriales</taxon>
        <taxon>Neisseriaceae</taxon>
        <taxon>Neisseria</taxon>
    </lineage>
</organism>
<name>ARGC_NEIG2</name>
<evidence type="ECO:0000255" key="1">
    <source>
        <dbReference type="HAMAP-Rule" id="MF_00150"/>
    </source>
</evidence>
<proteinExistence type="inferred from homology"/>
<feature type="chain" id="PRO_1000096732" description="N-acetyl-gamma-glutamyl-phosphate reductase">
    <location>
        <begin position="1"/>
        <end position="347"/>
    </location>
</feature>
<feature type="active site" evidence="1">
    <location>
        <position position="152"/>
    </location>
</feature>